<comment type="function">
    <text evidence="2 5 6 8 9 12">Catalytic subunit of protein phosphatase 6 (PP6) (Probable). Dephosphorylates phosphorylated phytochromes, with a preference toward Pfr forms. Plays a major role in the photoperiodic control of flowering time in long days by modulating phytochrome signals in flowering time control (By similarity). Involved in the regulation of polar auxin transport in roots (PubMed:22715043). Dephosphorylates directly the auxin efflux carriers PIN1 and PIN2, thus promoting their proper polar localization in root cell plasma membrane (PubMed:22715043). Acts antagonistically with the protein kinase PID to regulate the reversible phosphorylation of PIN and polar targeting, subsequently impacting polar auxin transport and plant development (PubMed:22715043). Involved in the regulation of abscisic acid (ABA) signaling during seed germination and postgermination seedling growth (PubMed:23404889). Functions as a negative regulator of ABA signaling through direct dephosphorylation and destabilization of ABI5 (PubMed:23404889). Acts antagonistically with the protein kinase SRK2E/SNRK2.6 to regulate ABI5 phosphorylation and ABA responses (PubMed:23404889). Involved in the regulation of phosphorylation status in hypocotyl phototropism (PubMed:30373470). Involved in the negative regulation of photomorphogenesis by controlling the stability and transcriptional activity of PIF3 and PIF4 proteins in the dark, via the regulation of their phosphorylation status (PubMed:31527236).</text>
</comment>
<comment type="catalytic activity">
    <reaction evidence="5">
        <text>O-phospho-L-seryl-[protein] + H2O = L-seryl-[protein] + phosphate</text>
        <dbReference type="Rhea" id="RHEA:20629"/>
        <dbReference type="Rhea" id="RHEA-COMP:9863"/>
        <dbReference type="Rhea" id="RHEA-COMP:11604"/>
        <dbReference type="ChEBI" id="CHEBI:15377"/>
        <dbReference type="ChEBI" id="CHEBI:29999"/>
        <dbReference type="ChEBI" id="CHEBI:43474"/>
        <dbReference type="ChEBI" id="CHEBI:83421"/>
        <dbReference type="EC" id="3.1.3.16"/>
    </reaction>
    <physiologicalReaction direction="left-to-right" evidence="5">
        <dbReference type="Rhea" id="RHEA:20630"/>
    </physiologicalReaction>
</comment>
<comment type="catalytic activity">
    <reaction evidence="5">
        <text>O-phospho-L-threonyl-[protein] + H2O = L-threonyl-[protein] + phosphate</text>
        <dbReference type="Rhea" id="RHEA:47004"/>
        <dbReference type="Rhea" id="RHEA-COMP:11060"/>
        <dbReference type="Rhea" id="RHEA-COMP:11605"/>
        <dbReference type="ChEBI" id="CHEBI:15377"/>
        <dbReference type="ChEBI" id="CHEBI:30013"/>
        <dbReference type="ChEBI" id="CHEBI:43474"/>
        <dbReference type="ChEBI" id="CHEBI:61977"/>
        <dbReference type="EC" id="3.1.3.16"/>
    </reaction>
    <physiologicalReaction direction="left-to-right" evidence="5">
        <dbReference type="Rhea" id="RHEA:47005"/>
    </physiologicalReaction>
</comment>
<comment type="cofactor">
    <cofactor evidence="5">
        <name>Zn(2+)</name>
        <dbReference type="ChEBI" id="CHEBI:29105"/>
    </cofactor>
    <text evidence="1">Binds 2 zinc ions per subunit.</text>
</comment>
<comment type="subunit">
    <text evidence="2 4 5 6 7 9">Interacts with PHYA and PHYB, mostly when they are phosphorylated and in Pfr forms (By similarity). Interacts with TAP46 (By similarity) (PubMed:21216945, PubMed:24357600). Interacts with PIN1 and PIN2 (PubMed:22715043). Interacts with ABI5 (PubMed:23404889). Interacts with PIF3 and PIF4 (PubMed:31527236). Protein phosphatase 6 (PP6) holoenzyme is a heterotrimeric complex formed by the catalytic subunit FYPP, a SAPS domain-containing subunit (SAL) and a protein phosphatase 2A regulatory subunit A (PP2AA) (PubMed:22715043).</text>
</comment>
<comment type="subcellular location">
    <subcellularLocation>
        <location evidence="2">Cytoplasm</location>
    </subcellularLocation>
</comment>
<comment type="tissue specificity">
    <text evidence="3 5">Mostly expressed in flowers (PubMed:12468726). Also detected to a lower extent in stems and leaves (PubMed:12468726). Expressed in roots (PubMed:22715043).</text>
</comment>
<comment type="disruption phenotype">
    <text evidence="5">No visible phenotype under normal growth conditions, but the double mutant plants fypp1 and fypp3 exhibit severe developmental defects in roots and leaves, and show defective gravitropism.</text>
</comment>
<comment type="similarity">
    <text evidence="11">Belongs to the PPP phosphatase family. PP-6 (PP-V) subfamily.</text>
</comment>
<proteinExistence type="evidence at protein level"/>
<gene>
    <name evidence="10" type="primary">FYPP1</name>
    <name evidence="13" type="ordered locus">At1g50370</name>
    <name evidence="14" type="ORF">F14I3.5</name>
</gene>
<name>FYPP1_ARATH</name>
<feature type="chain" id="PRO_0000308989" description="Phytochrome-associated serine/threonine-protein phosphatase 1">
    <location>
        <begin position="1"/>
        <end position="303"/>
    </location>
</feature>
<feature type="active site" description="Proton donor" evidence="1">
    <location>
        <position position="111"/>
    </location>
</feature>
<feature type="binding site" evidence="1">
    <location>
        <position position="50"/>
    </location>
    <ligand>
        <name>Zn(2+)</name>
        <dbReference type="ChEBI" id="CHEBI:29105"/>
        <label>1</label>
    </ligand>
</feature>
<feature type="binding site" evidence="1">
    <location>
        <position position="52"/>
    </location>
    <ligand>
        <name>Zn(2+)</name>
        <dbReference type="ChEBI" id="CHEBI:29105"/>
        <label>1</label>
    </ligand>
</feature>
<feature type="binding site" evidence="1">
    <location>
        <position position="78"/>
    </location>
    <ligand>
        <name>Zn(2+)</name>
        <dbReference type="ChEBI" id="CHEBI:29105"/>
        <label>1</label>
    </ligand>
</feature>
<feature type="binding site" evidence="1">
    <location>
        <position position="78"/>
    </location>
    <ligand>
        <name>Zn(2+)</name>
        <dbReference type="ChEBI" id="CHEBI:29105"/>
        <label>2</label>
    </ligand>
</feature>
<feature type="binding site" evidence="1">
    <location>
        <position position="110"/>
    </location>
    <ligand>
        <name>Zn(2+)</name>
        <dbReference type="ChEBI" id="CHEBI:29105"/>
        <label>2</label>
    </ligand>
</feature>
<feature type="binding site" evidence="1">
    <location>
        <position position="160"/>
    </location>
    <ligand>
        <name>Zn(2+)</name>
        <dbReference type="ChEBI" id="CHEBI:29105"/>
        <label>2</label>
    </ligand>
</feature>
<feature type="binding site" evidence="1">
    <location>
        <position position="234"/>
    </location>
    <ligand>
        <name>Zn(2+)</name>
        <dbReference type="ChEBI" id="CHEBI:29105"/>
        <label>2</label>
    </ligand>
</feature>
<feature type="site" description="Required for catalytic activity" evidence="5">
    <location>
        <position position="81"/>
    </location>
</feature>
<feature type="mutagenesis site" description="Almost abolishes catalytic activity." evidence="5">
    <original>D</original>
    <variation>N</variation>
    <location>
        <position position="81"/>
    </location>
</feature>
<feature type="sequence conflict" description="In Ref. 5; BAE98396." evidence="11" ref="5">
    <original>V</original>
    <variation>F</variation>
    <location>
        <position position="68"/>
    </location>
</feature>
<organism>
    <name type="scientific">Arabidopsis thaliana</name>
    <name type="common">Mouse-ear cress</name>
    <dbReference type="NCBI Taxonomy" id="3702"/>
    <lineage>
        <taxon>Eukaryota</taxon>
        <taxon>Viridiplantae</taxon>
        <taxon>Streptophyta</taxon>
        <taxon>Embryophyta</taxon>
        <taxon>Tracheophyta</taxon>
        <taxon>Spermatophyta</taxon>
        <taxon>Magnoliopsida</taxon>
        <taxon>eudicotyledons</taxon>
        <taxon>Gunneridae</taxon>
        <taxon>Pentapetalae</taxon>
        <taxon>rosids</taxon>
        <taxon>malvids</taxon>
        <taxon>Brassicales</taxon>
        <taxon>Brassicaceae</taxon>
        <taxon>Camelineae</taxon>
        <taxon>Arabidopsis</taxon>
    </lineage>
</organism>
<evidence type="ECO:0000250" key="1">
    <source>
        <dbReference type="UniProtKB" id="P36873"/>
    </source>
</evidence>
<evidence type="ECO:0000250" key="2">
    <source>
        <dbReference type="UniProtKB" id="Q9LHE7"/>
    </source>
</evidence>
<evidence type="ECO:0000269" key="3">
    <source>
    </source>
</evidence>
<evidence type="ECO:0000269" key="4">
    <source>
    </source>
</evidence>
<evidence type="ECO:0000269" key="5">
    <source>
    </source>
</evidence>
<evidence type="ECO:0000269" key="6">
    <source>
    </source>
</evidence>
<evidence type="ECO:0000269" key="7">
    <source>
    </source>
</evidence>
<evidence type="ECO:0000269" key="8">
    <source>
    </source>
</evidence>
<evidence type="ECO:0000269" key="9">
    <source>
    </source>
</evidence>
<evidence type="ECO:0000303" key="10">
    <source>
    </source>
</evidence>
<evidence type="ECO:0000305" key="11"/>
<evidence type="ECO:0000305" key="12">
    <source>
    </source>
</evidence>
<evidence type="ECO:0000312" key="13">
    <source>
        <dbReference type="Araport" id="AT1G50370"/>
    </source>
</evidence>
<evidence type="ECO:0000312" key="14">
    <source>
        <dbReference type="EMBL" id="AAD50050.1"/>
    </source>
</evidence>
<dbReference type="EC" id="3.1.3.16" evidence="5"/>
<dbReference type="EMBL" id="AC007980">
    <property type="protein sequence ID" value="AAD50050.1"/>
    <property type="molecule type" value="Genomic_DNA"/>
</dbReference>
<dbReference type="EMBL" id="CP002684">
    <property type="protein sequence ID" value="AEE32541.1"/>
    <property type="molecule type" value="Genomic_DNA"/>
</dbReference>
<dbReference type="EMBL" id="AF428374">
    <property type="protein sequence ID" value="AAL16304.1"/>
    <property type="molecule type" value="mRNA"/>
</dbReference>
<dbReference type="EMBL" id="BT020404">
    <property type="protein sequence ID" value="AAV97795.1"/>
    <property type="molecule type" value="mRNA"/>
</dbReference>
<dbReference type="EMBL" id="AK226232">
    <property type="protein sequence ID" value="BAE98396.1"/>
    <property type="molecule type" value="mRNA"/>
</dbReference>
<dbReference type="EMBL" id="AY087422">
    <property type="protein sequence ID" value="AAM64970.1"/>
    <property type="molecule type" value="mRNA"/>
</dbReference>
<dbReference type="PIR" id="H96539">
    <property type="entry name" value="H96539"/>
</dbReference>
<dbReference type="RefSeq" id="NP_175454.1">
    <property type="nucleotide sequence ID" value="NM_103920.4"/>
</dbReference>
<dbReference type="SMR" id="Q9SX52"/>
<dbReference type="BioGRID" id="26684">
    <property type="interactions" value="31"/>
</dbReference>
<dbReference type="FunCoup" id="Q9SX52">
    <property type="interactions" value="4924"/>
</dbReference>
<dbReference type="IntAct" id="Q9SX52">
    <property type="interactions" value="2"/>
</dbReference>
<dbReference type="STRING" id="3702.Q9SX52"/>
<dbReference type="PaxDb" id="3702-AT1G50370.1"/>
<dbReference type="ProteomicsDB" id="230540"/>
<dbReference type="EnsemblPlants" id="AT1G50370.1">
    <property type="protein sequence ID" value="AT1G50370.1"/>
    <property type="gene ID" value="AT1G50370"/>
</dbReference>
<dbReference type="GeneID" id="841459"/>
<dbReference type="Gramene" id="AT1G50370.1">
    <property type="protein sequence ID" value="AT1G50370.1"/>
    <property type="gene ID" value="AT1G50370"/>
</dbReference>
<dbReference type="KEGG" id="ath:AT1G50370"/>
<dbReference type="Araport" id="AT1G50370"/>
<dbReference type="TAIR" id="AT1G50370">
    <property type="gene designation" value="FYPP1"/>
</dbReference>
<dbReference type="eggNOG" id="KOG0373">
    <property type="taxonomic scope" value="Eukaryota"/>
</dbReference>
<dbReference type="HOGENOM" id="CLU_004962_8_1_1"/>
<dbReference type="InParanoid" id="Q9SX52"/>
<dbReference type="OMA" id="MCLKVKY"/>
<dbReference type="OrthoDB" id="1021090at2759"/>
<dbReference type="PhylomeDB" id="Q9SX52"/>
<dbReference type="PRO" id="PR:Q9SX52"/>
<dbReference type="Proteomes" id="UP000006548">
    <property type="component" value="Chromosome 1"/>
</dbReference>
<dbReference type="ExpressionAtlas" id="Q9SX52">
    <property type="expression patterns" value="baseline and differential"/>
</dbReference>
<dbReference type="GO" id="GO:0005737">
    <property type="term" value="C:cytoplasm"/>
    <property type="evidence" value="ECO:0007669"/>
    <property type="project" value="UniProtKB-SubCell"/>
</dbReference>
<dbReference type="GO" id="GO:0004722">
    <property type="term" value="F:protein serine/threonine phosphatase activity"/>
    <property type="evidence" value="ECO:0000314"/>
    <property type="project" value="UniProtKB"/>
</dbReference>
<dbReference type="GO" id="GO:0008270">
    <property type="term" value="F:zinc ion binding"/>
    <property type="evidence" value="ECO:0000314"/>
    <property type="project" value="UniProtKB"/>
</dbReference>
<dbReference type="CDD" id="cd07415">
    <property type="entry name" value="MPP_PP2A_PP4_PP6"/>
    <property type="match status" value="1"/>
</dbReference>
<dbReference type="FunFam" id="3.60.21.10:FF:000005">
    <property type="entry name" value="Serine/threonine-protein phosphatase"/>
    <property type="match status" value="1"/>
</dbReference>
<dbReference type="Gene3D" id="3.60.21.10">
    <property type="match status" value="1"/>
</dbReference>
<dbReference type="InterPro" id="IPR004843">
    <property type="entry name" value="Calcineurin-like_PHP_ApaH"/>
</dbReference>
<dbReference type="InterPro" id="IPR029052">
    <property type="entry name" value="Metallo-depent_PP-like"/>
</dbReference>
<dbReference type="InterPro" id="IPR047129">
    <property type="entry name" value="PPA2-like"/>
</dbReference>
<dbReference type="InterPro" id="IPR006186">
    <property type="entry name" value="Ser/Thr-sp_prot-phosphatase"/>
</dbReference>
<dbReference type="PANTHER" id="PTHR45619">
    <property type="entry name" value="SERINE/THREONINE-PROTEIN PHOSPHATASE PP2A-RELATED"/>
    <property type="match status" value="1"/>
</dbReference>
<dbReference type="Pfam" id="PF00149">
    <property type="entry name" value="Metallophos"/>
    <property type="match status" value="1"/>
</dbReference>
<dbReference type="PRINTS" id="PR00114">
    <property type="entry name" value="STPHPHTASE"/>
</dbReference>
<dbReference type="SMART" id="SM00156">
    <property type="entry name" value="PP2Ac"/>
    <property type="match status" value="1"/>
</dbReference>
<dbReference type="SUPFAM" id="SSF56300">
    <property type="entry name" value="Metallo-dependent phosphatases"/>
    <property type="match status" value="1"/>
</dbReference>
<dbReference type="PROSITE" id="PS00125">
    <property type="entry name" value="SER_THR_PHOSPHATASE"/>
    <property type="match status" value="1"/>
</dbReference>
<reference key="1">
    <citation type="journal article" date="2000" name="Nature">
        <title>Sequence and analysis of chromosome 1 of the plant Arabidopsis thaliana.</title>
        <authorList>
            <person name="Theologis A."/>
            <person name="Ecker J.R."/>
            <person name="Palm C.J."/>
            <person name="Federspiel N.A."/>
            <person name="Kaul S."/>
            <person name="White O."/>
            <person name="Alonso J."/>
            <person name="Altafi H."/>
            <person name="Araujo R."/>
            <person name="Bowman C.L."/>
            <person name="Brooks S.Y."/>
            <person name="Buehler E."/>
            <person name="Chan A."/>
            <person name="Chao Q."/>
            <person name="Chen H."/>
            <person name="Cheuk R.F."/>
            <person name="Chin C.W."/>
            <person name="Chung M.K."/>
            <person name="Conn L."/>
            <person name="Conway A.B."/>
            <person name="Conway A.R."/>
            <person name="Creasy T.H."/>
            <person name="Dewar K."/>
            <person name="Dunn P."/>
            <person name="Etgu P."/>
            <person name="Feldblyum T.V."/>
            <person name="Feng J.-D."/>
            <person name="Fong B."/>
            <person name="Fujii C.Y."/>
            <person name="Gill J.E."/>
            <person name="Goldsmith A.D."/>
            <person name="Haas B."/>
            <person name="Hansen N.F."/>
            <person name="Hughes B."/>
            <person name="Huizar L."/>
            <person name="Hunter J.L."/>
            <person name="Jenkins J."/>
            <person name="Johnson-Hopson C."/>
            <person name="Khan S."/>
            <person name="Khaykin E."/>
            <person name="Kim C.J."/>
            <person name="Koo H.L."/>
            <person name="Kremenetskaia I."/>
            <person name="Kurtz D.B."/>
            <person name="Kwan A."/>
            <person name="Lam B."/>
            <person name="Langin-Hooper S."/>
            <person name="Lee A."/>
            <person name="Lee J.M."/>
            <person name="Lenz C.A."/>
            <person name="Li J.H."/>
            <person name="Li Y.-P."/>
            <person name="Lin X."/>
            <person name="Liu S.X."/>
            <person name="Liu Z.A."/>
            <person name="Luros J.S."/>
            <person name="Maiti R."/>
            <person name="Marziali A."/>
            <person name="Militscher J."/>
            <person name="Miranda M."/>
            <person name="Nguyen M."/>
            <person name="Nierman W.C."/>
            <person name="Osborne B.I."/>
            <person name="Pai G."/>
            <person name="Peterson J."/>
            <person name="Pham P.K."/>
            <person name="Rizzo M."/>
            <person name="Rooney T."/>
            <person name="Rowley D."/>
            <person name="Sakano H."/>
            <person name="Salzberg S.L."/>
            <person name="Schwartz J.R."/>
            <person name="Shinn P."/>
            <person name="Southwick A.M."/>
            <person name="Sun H."/>
            <person name="Tallon L.J."/>
            <person name="Tambunga G."/>
            <person name="Toriumi M.J."/>
            <person name="Town C.D."/>
            <person name="Utterback T."/>
            <person name="Van Aken S."/>
            <person name="Vaysberg M."/>
            <person name="Vysotskaia V.S."/>
            <person name="Walker M."/>
            <person name="Wu D."/>
            <person name="Yu G."/>
            <person name="Fraser C.M."/>
            <person name="Venter J.C."/>
            <person name="Davis R.W."/>
        </authorList>
    </citation>
    <scope>NUCLEOTIDE SEQUENCE [LARGE SCALE GENOMIC DNA]</scope>
    <source>
        <strain>cv. Columbia</strain>
    </source>
</reference>
<reference key="2">
    <citation type="journal article" date="2017" name="Plant J.">
        <title>Araport11: a complete reannotation of the Arabidopsis thaliana reference genome.</title>
        <authorList>
            <person name="Cheng C.Y."/>
            <person name="Krishnakumar V."/>
            <person name="Chan A.P."/>
            <person name="Thibaud-Nissen F."/>
            <person name="Schobel S."/>
            <person name="Town C.D."/>
        </authorList>
    </citation>
    <scope>GENOME REANNOTATION</scope>
    <source>
        <strain>cv. Columbia</strain>
    </source>
</reference>
<reference key="3">
    <citation type="journal article" date="2003" name="Science">
        <title>Empirical analysis of transcriptional activity in the Arabidopsis genome.</title>
        <authorList>
            <person name="Yamada K."/>
            <person name="Lim J."/>
            <person name="Dale J.M."/>
            <person name="Chen H."/>
            <person name="Shinn P."/>
            <person name="Palm C.J."/>
            <person name="Southwick A.M."/>
            <person name="Wu H.C."/>
            <person name="Kim C.J."/>
            <person name="Nguyen M."/>
            <person name="Pham P.K."/>
            <person name="Cheuk R.F."/>
            <person name="Karlin-Newmann G."/>
            <person name="Liu S.X."/>
            <person name="Lam B."/>
            <person name="Sakano H."/>
            <person name="Wu T."/>
            <person name="Yu G."/>
            <person name="Miranda M."/>
            <person name="Quach H.L."/>
            <person name="Tripp M."/>
            <person name="Chang C.H."/>
            <person name="Lee J.M."/>
            <person name="Toriumi M.J."/>
            <person name="Chan M.M."/>
            <person name="Tang C.C."/>
            <person name="Onodera C.S."/>
            <person name="Deng J.M."/>
            <person name="Akiyama K."/>
            <person name="Ansari Y."/>
            <person name="Arakawa T."/>
            <person name="Banh J."/>
            <person name="Banno F."/>
            <person name="Bowser L."/>
            <person name="Brooks S.Y."/>
            <person name="Carninci P."/>
            <person name="Chao Q."/>
            <person name="Choy N."/>
            <person name="Enju A."/>
            <person name="Goldsmith A.D."/>
            <person name="Gurjal M."/>
            <person name="Hansen N.F."/>
            <person name="Hayashizaki Y."/>
            <person name="Johnson-Hopson C."/>
            <person name="Hsuan V.W."/>
            <person name="Iida K."/>
            <person name="Karnes M."/>
            <person name="Khan S."/>
            <person name="Koesema E."/>
            <person name="Ishida J."/>
            <person name="Jiang P.X."/>
            <person name="Jones T."/>
            <person name="Kawai J."/>
            <person name="Kamiya A."/>
            <person name="Meyers C."/>
            <person name="Nakajima M."/>
            <person name="Narusaka M."/>
            <person name="Seki M."/>
            <person name="Sakurai T."/>
            <person name="Satou M."/>
            <person name="Tamse R."/>
            <person name="Vaysberg M."/>
            <person name="Wallender E.K."/>
            <person name="Wong C."/>
            <person name="Yamamura Y."/>
            <person name="Yuan S."/>
            <person name="Shinozaki K."/>
            <person name="Davis R.W."/>
            <person name="Theologis A."/>
            <person name="Ecker J.R."/>
        </authorList>
    </citation>
    <scope>NUCLEOTIDE SEQUENCE [LARGE SCALE MRNA]</scope>
    <source>
        <strain>cv. Columbia</strain>
    </source>
</reference>
<reference key="4">
    <citation type="submission" date="2004-12" db="EMBL/GenBank/DDBJ databases">
        <title>Arabidopsis ORF clones.</title>
        <authorList>
            <person name="Shinn P."/>
            <person name="Chen H."/>
            <person name="Cheuk R.F."/>
            <person name="Kim C.J."/>
            <person name="Ecker J.R."/>
        </authorList>
    </citation>
    <scope>NUCLEOTIDE SEQUENCE [LARGE SCALE MRNA]</scope>
    <source>
        <strain>cv. Columbia</strain>
    </source>
</reference>
<reference key="5">
    <citation type="submission" date="2006-07" db="EMBL/GenBank/DDBJ databases">
        <title>Large-scale analysis of RIKEN Arabidopsis full-length (RAFL) cDNAs.</title>
        <authorList>
            <person name="Totoki Y."/>
            <person name="Seki M."/>
            <person name="Ishida J."/>
            <person name="Nakajima M."/>
            <person name="Enju A."/>
            <person name="Kamiya A."/>
            <person name="Narusaka M."/>
            <person name="Shin-i T."/>
            <person name="Nakagawa M."/>
            <person name="Sakamoto N."/>
            <person name="Oishi K."/>
            <person name="Kohara Y."/>
            <person name="Kobayashi M."/>
            <person name="Toyoda A."/>
            <person name="Sakaki Y."/>
            <person name="Sakurai T."/>
            <person name="Iida K."/>
            <person name="Akiyama K."/>
            <person name="Satou M."/>
            <person name="Toyoda T."/>
            <person name="Konagaya A."/>
            <person name="Carninci P."/>
            <person name="Kawai J."/>
            <person name="Hayashizaki Y."/>
            <person name="Shinozaki K."/>
        </authorList>
    </citation>
    <scope>NUCLEOTIDE SEQUENCE [LARGE SCALE MRNA]</scope>
    <source>
        <strain>cv. Columbia</strain>
    </source>
</reference>
<reference key="6">
    <citation type="submission" date="2002-03" db="EMBL/GenBank/DDBJ databases">
        <title>Full-length cDNA from Arabidopsis thaliana.</title>
        <authorList>
            <person name="Brover V.V."/>
            <person name="Troukhan M.E."/>
            <person name="Alexandrov N.A."/>
            <person name="Lu Y.-P."/>
            <person name="Flavell R.B."/>
            <person name="Feldmann K.A."/>
        </authorList>
    </citation>
    <scope>NUCLEOTIDE SEQUENCE [LARGE SCALE MRNA]</scope>
</reference>
<reference key="7">
    <citation type="journal article" date="2002" name="Plant Cell">
        <title>A phytochrome-associated protein phosphatase 2A modulates light signals in flowering time control in Arabidopsis.</title>
        <authorList>
            <person name="Kim D.-H."/>
            <person name="Kang J.-G."/>
            <person name="Yang S.-S."/>
            <person name="Chung K.-S."/>
            <person name="Song P.-S."/>
            <person name="Park C.-M."/>
        </authorList>
    </citation>
    <scope>TISSUE SPECIFICITY</scope>
</reference>
<reference key="8">
    <citation type="journal article" date="2007" name="Trends Plant Sci.">
        <title>Arabidopsis PPP family of serine/threonine phosphatases.</title>
        <authorList>
            <person name="Farkas I."/>
            <person name="Dombradi V."/>
            <person name="Miskei M."/>
            <person name="Szabados L."/>
            <person name="Koncz C."/>
        </authorList>
    </citation>
    <scope>GENE FAMILY</scope>
    <scope>NOMENCLATURE</scope>
</reference>
<reference key="9">
    <citation type="journal article" date="2011" name="Plant Cell">
        <title>The PP2A regulatory subunit Tap46, a component of the TOR signaling pathway, modulates growth and metabolism in plants.</title>
        <authorList>
            <person name="Ahn C.S."/>
            <person name="Han J.-A."/>
            <person name="Lee H.-S."/>
            <person name="Lee S."/>
            <person name="Pai H.-S."/>
        </authorList>
    </citation>
    <scope>INTERACTION WITH TAP46</scope>
</reference>
<reference key="10">
    <citation type="journal article" date="2012" name="Plant Cell">
        <title>A PP6-type phosphatase holoenzyme directly regulates PIN phosphorylation and auxin efflux in Arabidopsis.</title>
        <authorList>
            <person name="Dai M."/>
            <person name="Zhang C."/>
            <person name="Kania U."/>
            <person name="Chen F."/>
            <person name="Xue Q."/>
            <person name="McCray T."/>
            <person name="Li G."/>
            <person name="Qin G."/>
            <person name="Wakeley M."/>
            <person name="Terzaghi W."/>
            <person name="Wan J."/>
            <person name="Zhao Y."/>
            <person name="Xu J."/>
            <person name="Friml J."/>
            <person name="Deng X.W."/>
            <person name="Wang H."/>
        </authorList>
    </citation>
    <scope>FUNCTION</scope>
    <scope>CATALYTIC ACTIVITY</scope>
    <scope>COFACTOR</scope>
    <scope>INTERACTION WITH PIN1 AND PIN2</scope>
    <scope>SUBUNIT</scope>
    <scope>DISRUPTION PHENOTYPE</scope>
    <scope>MUTAGENESIS OF ASP-81</scope>
</reference>
<reference key="11">
    <citation type="journal article" date="2013" name="Plant Cell">
        <title>The PP6 phosphatase regulates ABI5 phosphorylation and abscisic acid signaling in Arabidopsis.</title>
        <authorList>
            <person name="Dai M."/>
            <person name="Xue Q."/>
            <person name="Mccray T."/>
            <person name="Margavage K."/>
            <person name="Chen F."/>
            <person name="Lee J.H."/>
            <person name="Nezames C.D."/>
            <person name="Guo L."/>
            <person name="Terzaghi W."/>
            <person name="Wan J."/>
            <person name="Deng X.W."/>
            <person name="Wang H."/>
        </authorList>
    </citation>
    <scope>FUNCTION</scope>
    <scope>INTERACTION WITH ABI5</scope>
</reference>
<reference key="12">
    <citation type="journal article" date="2014" name="Plant Physiol.">
        <title>TAP46 plays a positive role in the ABSCISIC ACID INSENSITIVE5-regulated gene expression in Arabidopsis.</title>
        <authorList>
            <person name="Hu R."/>
            <person name="Zhu Y."/>
            <person name="Shen G."/>
            <person name="Zhang H."/>
        </authorList>
    </citation>
    <scope>INTERACTION WITH TAP46</scope>
</reference>
<reference key="13">
    <citation type="journal article" date="2018" name="Plant Signal. Behav.">
        <title>Involvement of PP6-type protein phosphatase in hypocotyl phototropism in Arabidopsis seedlings.</title>
        <authorList>
            <person name="Haga K."/>
            <person name="Sakai T."/>
        </authorList>
    </citation>
    <scope>FUNCTION</scope>
</reference>
<reference key="14">
    <citation type="journal article" date="2019" name="Proc. Natl. Acad. Sci. U.S.A.">
        <title>Arabidopsis PP6 phosphatases dephosphorylate PIF proteins to repress photomorphogenesis.</title>
        <authorList>
            <person name="Yu X."/>
            <person name="Dong J."/>
            <person name="Deng Z."/>
            <person name="Jiang Y."/>
            <person name="Wu C."/>
            <person name="Qin X."/>
            <person name="Terzaghi W."/>
            <person name="Chen H."/>
            <person name="Dai M."/>
            <person name="Deng X.W."/>
        </authorList>
    </citation>
    <scope>FUNCTION</scope>
    <scope>INTERACTION WITH PIF3 AND PIF4</scope>
</reference>
<protein>
    <recommendedName>
        <fullName evidence="10">Phytochrome-associated serine/threonine-protein phosphatase 1</fullName>
        <shortName evidence="10">AtFyPP1</shortName>
        <ecNumber evidence="5">3.1.3.16</ecNumber>
    </recommendedName>
</protein>
<keyword id="KW-0963">Cytoplasm</keyword>
<keyword id="KW-0378">Hydrolase</keyword>
<keyword id="KW-0464">Manganese</keyword>
<keyword id="KW-0479">Metal-binding</keyword>
<keyword id="KW-0904">Protein phosphatase</keyword>
<keyword id="KW-1185">Reference proteome</keyword>
<keyword id="KW-0862">Zinc</keyword>
<accession>Q9SX52</accession>
<accession>Q0WWV2</accession>
<sequence length="303" mass="34819">MDLDQWISKVKDGQHLSEDELQLLCEYVKEILIEESNVQPVNSPVTVCGDIHGQFHDLMKLFQTGGHVPETNYIFMGDFVDRGYNSLEVFTILLLLKARHPANITLLRGNHESRQLTQVYGFYDECQRKYGNANAWRYCTDVFDYLTLSAIIDGTVLCVHGGLSPDVRTIDQIRLIERNCEIPHEGPFCDLMWSDPEDIETWAVSPRGAGWLFGSRVTTEFNHINNLDLVCRAHQLVQEGLKYMFQDKGLVTVWSAPNYCYRCGNVASILSFNDNMEREVKFFTETEENNQMRGPRTGVPYFL</sequence>